<reference key="1">
    <citation type="submission" date="2007-08" db="EMBL/GenBank/DDBJ databases">
        <authorList>
            <consortium name="The Vibrio harveyi Genome Sequencing Project"/>
            <person name="Bassler B."/>
            <person name="Clifton S.W."/>
            <person name="Fulton L."/>
            <person name="Delehaunty K."/>
            <person name="Fronick C."/>
            <person name="Harrison M."/>
            <person name="Markivic C."/>
            <person name="Fulton R."/>
            <person name="Tin-Wollam A.-M."/>
            <person name="Shah N."/>
            <person name="Pepin K."/>
            <person name="Nash W."/>
            <person name="Thiruvilangam P."/>
            <person name="Bhonagiri V."/>
            <person name="Waters C."/>
            <person name="Tu K.C."/>
            <person name="Irgon J."/>
            <person name="Wilson R.K."/>
        </authorList>
    </citation>
    <scope>NUCLEOTIDE SEQUENCE [LARGE SCALE GENOMIC DNA]</scope>
    <source>
        <strain>ATCC BAA-1116 / BB120</strain>
    </source>
</reference>
<keyword id="KW-0687">Ribonucleoprotein</keyword>
<keyword id="KW-0689">Ribosomal protein</keyword>
<gene>
    <name evidence="1" type="primary">rpmF</name>
    <name type="ordered locus">VIBHAR_02912</name>
</gene>
<evidence type="ECO:0000255" key="1">
    <source>
        <dbReference type="HAMAP-Rule" id="MF_00340"/>
    </source>
</evidence>
<evidence type="ECO:0000256" key="2">
    <source>
        <dbReference type="SAM" id="MobiDB-lite"/>
    </source>
</evidence>
<evidence type="ECO:0000305" key="3"/>
<organism>
    <name type="scientific">Vibrio campbellii (strain ATCC BAA-1116)</name>
    <dbReference type="NCBI Taxonomy" id="2902295"/>
    <lineage>
        <taxon>Bacteria</taxon>
        <taxon>Pseudomonadati</taxon>
        <taxon>Pseudomonadota</taxon>
        <taxon>Gammaproteobacteria</taxon>
        <taxon>Vibrionales</taxon>
        <taxon>Vibrionaceae</taxon>
        <taxon>Vibrio</taxon>
    </lineage>
</organism>
<comment type="similarity">
    <text evidence="1">Belongs to the bacterial ribosomal protein bL32 family.</text>
</comment>
<name>RL32_VIBC1</name>
<feature type="chain" id="PRO_1000005087" description="Large ribosomal subunit protein bL32">
    <location>
        <begin position="1"/>
        <end position="56"/>
    </location>
</feature>
<feature type="region of interest" description="Disordered" evidence="2">
    <location>
        <begin position="1"/>
        <end position="28"/>
    </location>
</feature>
<feature type="compositionally biased region" description="Basic residues" evidence="2">
    <location>
        <begin position="1"/>
        <end position="16"/>
    </location>
</feature>
<protein>
    <recommendedName>
        <fullName evidence="1">Large ribosomal subunit protein bL32</fullName>
    </recommendedName>
    <alternativeName>
        <fullName evidence="3">50S ribosomal protein L32</fullName>
    </alternativeName>
</protein>
<sequence length="56" mass="6298">MAVQKNRKTRSKRGMRRSHDALTTAALSVDATSGETHLRHNVTAEGYYRGQKVINK</sequence>
<dbReference type="EMBL" id="CP000789">
    <property type="protein sequence ID" value="ABU71865.1"/>
    <property type="molecule type" value="Genomic_DNA"/>
</dbReference>
<dbReference type="RefSeq" id="WP_005396978.1">
    <property type="nucleotide sequence ID" value="NC_022269.1"/>
</dbReference>
<dbReference type="SMR" id="A7MZU8"/>
<dbReference type="GeneID" id="83581131"/>
<dbReference type="KEGG" id="vha:VIBHAR_02912"/>
<dbReference type="PATRIC" id="fig|338187.25.peg.3275"/>
<dbReference type="Proteomes" id="UP000008152">
    <property type="component" value="Chromosome I"/>
</dbReference>
<dbReference type="GO" id="GO:0015934">
    <property type="term" value="C:large ribosomal subunit"/>
    <property type="evidence" value="ECO:0007669"/>
    <property type="project" value="InterPro"/>
</dbReference>
<dbReference type="GO" id="GO:0003735">
    <property type="term" value="F:structural constituent of ribosome"/>
    <property type="evidence" value="ECO:0007669"/>
    <property type="project" value="InterPro"/>
</dbReference>
<dbReference type="GO" id="GO:0006412">
    <property type="term" value="P:translation"/>
    <property type="evidence" value="ECO:0007669"/>
    <property type="project" value="UniProtKB-UniRule"/>
</dbReference>
<dbReference type="HAMAP" id="MF_00340">
    <property type="entry name" value="Ribosomal_bL32"/>
    <property type="match status" value="1"/>
</dbReference>
<dbReference type="InterPro" id="IPR002677">
    <property type="entry name" value="Ribosomal_bL32"/>
</dbReference>
<dbReference type="InterPro" id="IPR044957">
    <property type="entry name" value="Ribosomal_bL32_bact"/>
</dbReference>
<dbReference type="InterPro" id="IPR011332">
    <property type="entry name" value="Ribosomal_zn-bd"/>
</dbReference>
<dbReference type="NCBIfam" id="TIGR01031">
    <property type="entry name" value="rpmF_bact"/>
    <property type="match status" value="1"/>
</dbReference>
<dbReference type="PANTHER" id="PTHR35534">
    <property type="entry name" value="50S RIBOSOMAL PROTEIN L32"/>
    <property type="match status" value="1"/>
</dbReference>
<dbReference type="PANTHER" id="PTHR35534:SF1">
    <property type="entry name" value="LARGE RIBOSOMAL SUBUNIT PROTEIN BL32"/>
    <property type="match status" value="1"/>
</dbReference>
<dbReference type="Pfam" id="PF01783">
    <property type="entry name" value="Ribosomal_L32p"/>
    <property type="match status" value="1"/>
</dbReference>
<dbReference type="SUPFAM" id="SSF57829">
    <property type="entry name" value="Zn-binding ribosomal proteins"/>
    <property type="match status" value="1"/>
</dbReference>
<accession>A7MZU8</accession>
<proteinExistence type="inferred from homology"/>